<accession>Q24JV4</accession>
<evidence type="ECO:0000256" key="1">
    <source>
        <dbReference type="SAM" id="MobiDB-lite"/>
    </source>
</evidence>
<evidence type="ECO:0000305" key="2"/>
<sequence>MAQGKQKFKAQRPGGAKKHQNKPKGLKKGGRIIAPKKAQVVQQQKLKKGLEVAIRNKIEHEVTQKASTSLHKKLSVLKTPAQKSGTAGAPKPAAGPSK</sequence>
<name>U390_DANRE</name>
<proteinExistence type="inferred from homology"/>
<comment type="similarity">
    <text evidence="2">Belongs to the UPF0390 family.</text>
</comment>
<reference key="1">
    <citation type="submission" date="2006-03" db="EMBL/GenBank/DDBJ databases">
        <authorList>
            <consortium name="NIH - Zebrafish Gene Collection (ZGC) project"/>
        </authorList>
    </citation>
    <scope>NUCLEOTIDE SEQUENCE [LARGE SCALE MRNA]</scope>
</reference>
<organism>
    <name type="scientific">Danio rerio</name>
    <name type="common">Zebrafish</name>
    <name type="synonym">Brachydanio rerio</name>
    <dbReference type="NCBI Taxonomy" id="7955"/>
    <lineage>
        <taxon>Eukaryota</taxon>
        <taxon>Metazoa</taxon>
        <taxon>Chordata</taxon>
        <taxon>Craniata</taxon>
        <taxon>Vertebrata</taxon>
        <taxon>Euteleostomi</taxon>
        <taxon>Actinopterygii</taxon>
        <taxon>Neopterygii</taxon>
        <taxon>Teleostei</taxon>
        <taxon>Ostariophysi</taxon>
        <taxon>Cypriniformes</taxon>
        <taxon>Danionidae</taxon>
        <taxon>Danioninae</taxon>
        <taxon>Danio</taxon>
    </lineage>
</organism>
<protein>
    <recommendedName>
        <fullName>UPF0390 protein zgc136864</fullName>
    </recommendedName>
</protein>
<keyword id="KW-1185">Reference proteome</keyword>
<feature type="chain" id="PRO_0000255468" description="UPF0390 protein zgc136864">
    <location>
        <begin position="1"/>
        <end position="98"/>
    </location>
</feature>
<feature type="region of interest" description="Disordered" evidence="1">
    <location>
        <begin position="1"/>
        <end position="38"/>
    </location>
</feature>
<feature type="region of interest" description="Disordered" evidence="1">
    <location>
        <begin position="63"/>
        <end position="98"/>
    </location>
</feature>
<feature type="compositionally biased region" description="Basic residues" evidence="1">
    <location>
        <begin position="1"/>
        <end position="30"/>
    </location>
</feature>
<feature type="compositionally biased region" description="Low complexity" evidence="1">
    <location>
        <begin position="83"/>
        <end position="98"/>
    </location>
</feature>
<dbReference type="EMBL" id="BC114294">
    <property type="protein sequence ID" value="AAI14295.1"/>
    <property type="molecule type" value="mRNA"/>
</dbReference>
<dbReference type="RefSeq" id="NP_001035133.1">
    <property type="nucleotide sequence ID" value="NM_001040044.2"/>
</dbReference>
<dbReference type="SMR" id="Q24JV4"/>
<dbReference type="FunCoup" id="Q24JV4">
    <property type="interactions" value="188"/>
</dbReference>
<dbReference type="STRING" id="7955.ENSDARP00000078007"/>
<dbReference type="PaxDb" id="7955-ENSDARP00000078007"/>
<dbReference type="Ensembl" id="ENSDART00000083572">
    <property type="protein sequence ID" value="ENSDARP00000078007"/>
    <property type="gene ID" value="ENSDARG00000059816"/>
</dbReference>
<dbReference type="GeneID" id="677749"/>
<dbReference type="KEGG" id="dre:677749"/>
<dbReference type="AGR" id="ZFIN:ZDB-GENE-060331-129"/>
<dbReference type="ZFIN" id="ZDB-GENE-060331-129">
    <property type="gene designation" value="zgc:136864"/>
</dbReference>
<dbReference type="eggNOG" id="ENOG502S8BT">
    <property type="taxonomic scope" value="Eukaryota"/>
</dbReference>
<dbReference type="HOGENOM" id="CLU_182392_0_0_1"/>
<dbReference type="InParanoid" id="Q24JV4"/>
<dbReference type="OMA" id="GQHNKQK"/>
<dbReference type="OrthoDB" id="5239630at2759"/>
<dbReference type="PhylomeDB" id="Q24JV4"/>
<dbReference type="TreeFam" id="TF333384"/>
<dbReference type="PRO" id="PR:Q24JV4"/>
<dbReference type="Proteomes" id="UP000000437">
    <property type="component" value="Chromosome 1"/>
</dbReference>
<dbReference type="Bgee" id="ENSDARG00000059816">
    <property type="expression patterns" value="Expressed in mature ovarian follicle and 22 other cell types or tissues"/>
</dbReference>
<dbReference type="InterPro" id="IPR019034">
    <property type="entry name" value="UPF0390"/>
</dbReference>
<dbReference type="PANTHER" id="PTHR16967">
    <property type="entry name" value="LEYDIG CELL TUMOR 10 KDA PROTEIN HOMOLOG"/>
    <property type="match status" value="1"/>
</dbReference>
<dbReference type="PANTHER" id="PTHR16967:SF1">
    <property type="entry name" value="LEYDIG CELL TUMOR 10 KDA PROTEIN HOMOLOG"/>
    <property type="match status" value="1"/>
</dbReference>
<dbReference type="Pfam" id="PF09495">
    <property type="entry name" value="DUF2462"/>
    <property type="match status" value="1"/>
</dbReference>
<gene>
    <name type="ORF">zgc:136864</name>
</gene>